<feature type="chain" id="PRO_1000142872" description="Large ribosomal subunit protein uL15">
    <location>
        <begin position="1"/>
        <end position="144"/>
    </location>
</feature>
<feature type="region of interest" description="Disordered" evidence="2">
    <location>
        <begin position="1"/>
        <end position="54"/>
    </location>
</feature>
<feature type="compositionally biased region" description="Gly residues" evidence="2">
    <location>
        <begin position="21"/>
        <end position="31"/>
    </location>
</feature>
<gene>
    <name evidence="1" type="primary">rplO</name>
    <name type="ordered locus">SeAg_B3617</name>
</gene>
<organism>
    <name type="scientific">Salmonella agona (strain SL483)</name>
    <dbReference type="NCBI Taxonomy" id="454166"/>
    <lineage>
        <taxon>Bacteria</taxon>
        <taxon>Pseudomonadati</taxon>
        <taxon>Pseudomonadota</taxon>
        <taxon>Gammaproteobacteria</taxon>
        <taxon>Enterobacterales</taxon>
        <taxon>Enterobacteriaceae</taxon>
        <taxon>Salmonella</taxon>
    </lineage>
</organism>
<protein>
    <recommendedName>
        <fullName evidence="1">Large ribosomal subunit protein uL15</fullName>
    </recommendedName>
    <alternativeName>
        <fullName evidence="3">50S ribosomal protein L15</fullName>
    </alternativeName>
</protein>
<name>RL15_SALA4</name>
<dbReference type="EMBL" id="CP001138">
    <property type="protein sequence ID" value="ACH51164.1"/>
    <property type="molecule type" value="Genomic_DNA"/>
</dbReference>
<dbReference type="RefSeq" id="WP_001238917.1">
    <property type="nucleotide sequence ID" value="NC_011149.1"/>
</dbReference>
<dbReference type="SMR" id="B5F7S6"/>
<dbReference type="GeneID" id="93778686"/>
<dbReference type="KEGG" id="sea:SeAg_B3617"/>
<dbReference type="HOGENOM" id="CLU_055188_4_2_6"/>
<dbReference type="Proteomes" id="UP000008819">
    <property type="component" value="Chromosome"/>
</dbReference>
<dbReference type="GO" id="GO:0022625">
    <property type="term" value="C:cytosolic large ribosomal subunit"/>
    <property type="evidence" value="ECO:0007669"/>
    <property type="project" value="TreeGrafter"/>
</dbReference>
<dbReference type="GO" id="GO:0019843">
    <property type="term" value="F:rRNA binding"/>
    <property type="evidence" value="ECO:0007669"/>
    <property type="project" value="UniProtKB-UniRule"/>
</dbReference>
<dbReference type="GO" id="GO:0003735">
    <property type="term" value="F:structural constituent of ribosome"/>
    <property type="evidence" value="ECO:0007669"/>
    <property type="project" value="InterPro"/>
</dbReference>
<dbReference type="GO" id="GO:0006412">
    <property type="term" value="P:translation"/>
    <property type="evidence" value="ECO:0007669"/>
    <property type="project" value="UniProtKB-UniRule"/>
</dbReference>
<dbReference type="FunFam" id="3.100.10.10:FF:000003">
    <property type="entry name" value="50S ribosomal protein L15"/>
    <property type="match status" value="1"/>
</dbReference>
<dbReference type="Gene3D" id="3.100.10.10">
    <property type="match status" value="1"/>
</dbReference>
<dbReference type="HAMAP" id="MF_01341">
    <property type="entry name" value="Ribosomal_uL15"/>
    <property type="match status" value="1"/>
</dbReference>
<dbReference type="InterPro" id="IPR030878">
    <property type="entry name" value="Ribosomal_uL15"/>
</dbReference>
<dbReference type="InterPro" id="IPR021131">
    <property type="entry name" value="Ribosomal_uL15/eL18"/>
</dbReference>
<dbReference type="InterPro" id="IPR036227">
    <property type="entry name" value="Ribosomal_uL15/eL18_sf"/>
</dbReference>
<dbReference type="InterPro" id="IPR005749">
    <property type="entry name" value="Ribosomal_uL15_bac-type"/>
</dbReference>
<dbReference type="InterPro" id="IPR001196">
    <property type="entry name" value="Ribosomal_uL15_CS"/>
</dbReference>
<dbReference type="NCBIfam" id="TIGR01071">
    <property type="entry name" value="rplO_bact"/>
    <property type="match status" value="1"/>
</dbReference>
<dbReference type="PANTHER" id="PTHR12934">
    <property type="entry name" value="50S RIBOSOMAL PROTEIN L15"/>
    <property type="match status" value="1"/>
</dbReference>
<dbReference type="PANTHER" id="PTHR12934:SF11">
    <property type="entry name" value="LARGE RIBOSOMAL SUBUNIT PROTEIN UL15M"/>
    <property type="match status" value="1"/>
</dbReference>
<dbReference type="Pfam" id="PF00828">
    <property type="entry name" value="Ribosomal_L27A"/>
    <property type="match status" value="1"/>
</dbReference>
<dbReference type="SUPFAM" id="SSF52080">
    <property type="entry name" value="Ribosomal proteins L15p and L18e"/>
    <property type="match status" value="1"/>
</dbReference>
<dbReference type="PROSITE" id="PS00475">
    <property type="entry name" value="RIBOSOMAL_L15"/>
    <property type="match status" value="1"/>
</dbReference>
<accession>B5F7S6</accession>
<proteinExistence type="inferred from homology"/>
<evidence type="ECO:0000255" key="1">
    <source>
        <dbReference type="HAMAP-Rule" id="MF_01341"/>
    </source>
</evidence>
<evidence type="ECO:0000256" key="2">
    <source>
        <dbReference type="SAM" id="MobiDB-lite"/>
    </source>
</evidence>
<evidence type="ECO:0000305" key="3"/>
<sequence length="144" mass="14966">MRLNTLSPAEGSKKAGKRLGRGIGSGLGKTGGRGHKGQKSRSGGGVRRGFEGGQMPLYRRLPKFGFTSRKAAITAEVRLSDLAKVEGGVVDLNTLKAANIIGIQIEFAKVILAGEVTTPVTVRGLRVTKGARAAIEAAGGKIEE</sequence>
<comment type="function">
    <text evidence="1">Binds to the 23S rRNA.</text>
</comment>
<comment type="subunit">
    <text evidence="1">Part of the 50S ribosomal subunit.</text>
</comment>
<comment type="similarity">
    <text evidence="1">Belongs to the universal ribosomal protein uL15 family.</text>
</comment>
<reference key="1">
    <citation type="journal article" date="2011" name="J. Bacteriol.">
        <title>Comparative genomics of 28 Salmonella enterica isolates: evidence for CRISPR-mediated adaptive sublineage evolution.</title>
        <authorList>
            <person name="Fricke W.F."/>
            <person name="Mammel M.K."/>
            <person name="McDermott P.F."/>
            <person name="Tartera C."/>
            <person name="White D.G."/>
            <person name="Leclerc J.E."/>
            <person name="Ravel J."/>
            <person name="Cebula T.A."/>
        </authorList>
    </citation>
    <scope>NUCLEOTIDE SEQUENCE [LARGE SCALE GENOMIC DNA]</scope>
    <source>
        <strain>SL483</strain>
    </source>
</reference>
<keyword id="KW-0687">Ribonucleoprotein</keyword>
<keyword id="KW-0689">Ribosomal protein</keyword>
<keyword id="KW-0694">RNA-binding</keyword>
<keyword id="KW-0699">rRNA-binding</keyword>